<comment type="function">
    <text evidence="1">Non-catalytic subunit of the tRNA-splicing endonuclease complex, a complex responsible for identification and cleavage of the splice sites in pre-tRNA. It cleaves pre-tRNA at the 5' and 3' splice sites to release the intron. The products are an intron and two tRNA half-molecules bearing 2',3' cyclic phosphate and 5'-OH termini. There are no conserved sequences at the splice sites, but the intron is invariably located at the same site in the gene, placing the splice sites an invariant distance from the constant structural features of the tRNA body. May be required to embody the molecular ruler of the complex (By similarity).</text>
</comment>
<comment type="subunit">
    <text evidence="1">tRNA splicing endonuclease is a heterotetramer composed of SEN2, SEN15, SEN34 and SEN54. Interacts directly with SEN2 (By similarity).</text>
</comment>
<comment type="similarity">
    <text evidence="3">Belongs to the SEN54 family.</text>
</comment>
<accession>Q74ZJ5</accession>
<evidence type="ECO:0000250" key="1"/>
<evidence type="ECO:0000256" key="2">
    <source>
        <dbReference type="SAM" id="MobiDB-lite"/>
    </source>
</evidence>
<evidence type="ECO:0000305" key="3"/>
<dbReference type="EMBL" id="AE016820">
    <property type="protein sequence ID" value="AAS54695.1"/>
    <property type="molecule type" value="Genomic_DNA"/>
</dbReference>
<dbReference type="RefSeq" id="NP_986871.1">
    <property type="nucleotide sequence ID" value="NM_211933.1"/>
</dbReference>
<dbReference type="FunCoup" id="Q74ZJ5">
    <property type="interactions" value="70"/>
</dbReference>
<dbReference type="STRING" id="284811.Q74ZJ5"/>
<dbReference type="EnsemblFungi" id="AAS54695">
    <property type="protein sequence ID" value="AAS54695"/>
    <property type="gene ID" value="AGOS_AGR205C"/>
</dbReference>
<dbReference type="GeneID" id="4623173"/>
<dbReference type="KEGG" id="ago:AGOS_AGR205C"/>
<dbReference type="eggNOG" id="KOG4772">
    <property type="taxonomic scope" value="Eukaryota"/>
</dbReference>
<dbReference type="HOGENOM" id="CLU_028449_0_1_1"/>
<dbReference type="InParanoid" id="Q74ZJ5"/>
<dbReference type="OMA" id="FNVWKPQ"/>
<dbReference type="OrthoDB" id="408683at2759"/>
<dbReference type="Proteomes" id="UP000000591">
    <property type="component" value="Chromosome VII"/>
</dbReference>
<dbReference type="GO" id="GO:0005741">
    <property type="term" value="C:mitochondrial outer membrane"/>
    <property type="evidence" value="ECO:0007669"/>
    <property type="project" value="EnsemblFungi"/>
</dbReference>
<dbReference type="GO" id="GO:0000214">
    <property type="term" value="C:tRNA-intron endonuclease complex"/>
    <property type="evidence" value="ECO:0000318"/>
    <property type="project" value="GO_Central"/>
</dbReference>
<dbReference type="GO" id="GO:0000213">
    <property type="term" value="F:tRNA-intron endonuclease activity"/>
    <property type="evidence" value="ECO:0007669"/>
    <property type="project" value="EnsemblFungi"/>
</dbReference>
<dbReference type="GO" id="GO:0000379">
    <property type="term" value="P:tRNA-type intron splice site recognition and cleavage"/>
    <property type="evidence" value="ECO:0000318"/>
    <property type="project" value="GO_Central"/>
</dbReference>
<dbReference type="InterPro" id="IPR024337">
    <property type="entry name" value="tRNA_splic_suSen54"/>
</dbReference>
<dbReference type="InterPro" id="IPR024336">
    <property type="entry name" value="tRNA_splic_suSen54_N"/>
</dbReference>
<dbReference type="PANTHER" id="PTHR21027">
    <property type="entry name" value="TRNA-SPLICING ENDONUCLEASE SUBUNIT SEN54"/>
    <property type="match status" value="1"/>
</dbReference>
<dbReference type="PANTHER" id="PTHR21027:SF1">
    <property type="entry name" value="TRNA-SPLICING ENDONUCLEASE SUBUNIT SEN54"/>
    <property type="match status" value="1"/>
</dbReference>
<dbReference type="Pfam" id="PF12928">
    <property type="entry name" value="tRNA_int_end_N2"/>
    <property type="match status" value="1"/>
</dbReference>
<keyword id="KW-1185">Reference proteome</keyword>
<keyword id="KW-0819">tRNA processing</keyword>
<name>SEN54_EREGS</name>
<sequence length="455" mass="52261">MTEAEELSVALGLHDSDAEEDALAQDWSEMAKLVKKANQHALPRRGEKDYEPDGTDAQALLLHTAKETMFGTLLNSVRGSTVKTLIKAYWEEEQRMARIPNARGSFTNTMGKVDKHGQCWLQLHEFVYLVERGTVSPYLALTVGDEKSNHEDVLLSVQDVYALFSSTEELDEFLVYAHLKRLGFIVVSTDNPPAHVTSFYPPLSQKSSASSNWFCHIHSWLKTPQNLFHVPLYHPLHFLLHRYTSSPQLYEELSQHIPFKKVPHDINELREERNNGILNPNVKQWKIAFNVWKPKSSFKKKTPGLPDFQVVVYNKDNAGQQFPTYDEFRSIFHRLDYRFDFLNELDVDDSAWDDYTYTDGMPTREFMQRNKIAPSQPHSGGDSRKKKARTYPQHIAQIRRLKSGFKSFILSVIDDGLVSFVRIAESDFGSSNIWYTPPSQTGTTNNRTRSDKVDV</sequence>
<proteinExistence type="inferred from homology"/>
<reference key="1">
    <citation type="journal article" date="2004" name="Science">
        <title>The Ashbya gossypii genome as a tool for mapping the ancient Saccharomyces cerevisiae genome.</title>
        <authorList>
            <person name="Dietrich F.S."/>
            <person name="Voegeli S."/>
            <person name="Brachat S."/>
            <person name="Lerch A."/>
            <person name="Gates K."/>
            <person name="Steiner S."/>
            <person name="Mohr C."/>
            <person name="Poehlmann R."/>
            <person name="Luedi P."/>
            <person name="Choi S."/>
            <person name="Wing R.A."/>
            <person name="Flavier A."/>
            <person name="Gaffney T.D."/>
            <person name="Philippsen P."/>
        </authorList>
    </citation>
    <scope>NUCLEOTIDE SEQUENCE [LARGE SCALE GENOMIC DNA]</scope>
    <source>
        <strain>ATCC 10895 / CBS 109.51 / FGSC 9923 / NRRL Y-1056</strain>
    </source>
</reference>
<reference key="2">
    <citation type="journal article" date="2013" name="G3 (Bethesda)">
        <title>Genomes of Ashbya fungi isolated from insects reveal four mating-type loci, numerous translocations, lack of transposons, and distinct gene duplications.</title>
        <authorList>
            <person name="Dietrich F.S."/>
            <person name="Voegeli S."/>
            <person name="Kuo S."/>
            <person name="Philippsen P."/>
        </authorList>
    </citation>
    <scope>GENOME REANNOTATION</scope>
    <source>
        <strain>ATCC 10895 / CBS 109.51 / FGSC 9923 / NRRL Y-1056</strain>
    </source>
</reference>
<gene>
    <name type="primary">SEN54</name>
    <name type="ordered locus">AGR205C</name>
</gene>
<organism>
    <name type="scientific">Eremothecium gossypii (strain ATCC 10895 / CBS 109.51 / FGSC 9923 / NRRL Y-1056)</name>
    <name type="common">Yeast</name>
    <name type="synonym">Ashbya gossypii</name>
    <dbReference type="NCBI Taxonomy" id="284811"/>
    <lineage>
        <taxon>Eukaryota</taxon>
        <taxon>Fungi</taxon>
        <taxon>Dikarya</taxon>
        <taxon>Ascomycota</taxon>
        <taxon>Saccharomycotina</taxon>
        <taxon>Saccharomycetes</taxon>
        <taxon>Saccharomycetales</taxon>
        <taxon>Saccharomycetaceae</taxon>
        <taxon>Eremothecium</taxon>
    </lineage>
</organism>
<feature type="chain" id="PRO_0000194031" description="tRNA-splicing endonuclease subunit SEN54">
    <location>
        <begin position="1"/>
        <end position="455"/>
    </location>
</feature>
<feature type="region of interest" description="Disordered" evidence="2">
    <location>
        <begin position="366"/>
        <end position="390"/>
    </location>
</feature>
<feature type="region of interest" description="Disordered" evidence="2">
    <location>
        <begin position="434"/>
        <end position="455"/>
    </location>
</feature>
<feature type="compositionally biased region" description="Polar residues" evidence="2">
    <location>
        <begin position="434"/>
        <end position="447"/>
    </location>
</feature>
<protein>
    <recommendedName>
        <fullName>tRNA-splicing endonuclease subunit SEN54</fullName>
    </recommendedName>
    <alternativeName>
        <fullName>tRNA-intron endonuclease SEN54</fullName>
    </alternativeName>
</protein>